<proteinExistence type="inferred from homology"/>
<comment type="function">
    <text evidence="1">Catalyzes the dephosphorylation of undecaprenyl diphosphate (UPP). Confers resistance to bacitracin.</text>
</comment>
<comment type="catalytic activity">
    <reaction evidence="1">
        <text>di-trans,octa-cis-undecaprenyl diphosphate + H2O = di-trans,octa-cis-undecaprenyl phosphate + phosphate + H(+)</text>
        <dbReference type="Rhea" id="RHEA:28094"/>
        <dbReference type="ChEBI" id="CHEBI:15377"/>
        <dbReference type="ChEBI" id="CHEBI:15378"/>
        <dbReference type="ChEBI" id="CHEBI:43474"/>
        <dbReference type="ChEBI" id="CHEBI:58405"/>
        <dbReference type="ChEBI" id="CHEBI:60392"/>
        <dbReference type="EC" id="3.6.1.27"/>
    </reaction>
</comment>
<comment type="subcellular location">
    <subcellularLocation>
        <location evidence="1">Cell membrane</location>
        <topology evidence="1">Multi-pass membrane protein</topology>
    </subcellularLocation>
</comment>
<comment type="miscellaneous">
    <text>Bacitracin is thought to be involved in the inhibition of peptidoglycan synthesis by sequestering undecaprenyl diphosphate, thereby reducing the pool of lipid carrier available.</text>
</comment>
<comment type="similarity">
    <text evidence="1">Belongs to the UppP family.</text>
</comment>
<keyword id="KW-0046">Antibiotic resistance</keyword>
<keyword id="KW-1003">Cell membrane</keyword>
<keyword id="KW-0133">Cell shape</keyword>
<keyword id="KW-0961">Cell wall biogenesis/degradation</keyword>
<keyword id="KW-0378">Hydrolase</keyword>
<keyword id="KW-0472">Membrane</keyword>
<keyword id="KW-0573">Peptidoglycan synthesis</keyword>
<keyword id="KW-0812">Transmembrane</keyword>
<keyword id="KW-1133">Transmembrane helix</keyword>
<sequence>MLIIELLKAIFFGIIEGITEWLPVSSTGHLILVQEFIRLNQDKAFIEMFNIVIQLGAIIAVMLIYFERLNPFQPGKTAREVQLTWQLWLKVVIACIPSILIAVPLDNWFEAHFYFMVPIAIALIVYGIAFIWIEKRNAQQEPAVTELARMSYKTAFFIGCFQVLSIVPGTSRSGATILGAIILGTSRTVAADFTFFLAIPTMFGYSGLKAVKFFLDGHHLDFAQVLILLVASLTAFVVSLLAIRFLTDYVKKHDFTIFGKYRIVLGSLLLIYSFFKFVF</sequence>
<accession>P0DH31</accession>
<accession>P67393</accession>
<accession>Q9A1G8</accession>
<organism>
    <name type="scientific">Streptococcus pyogenes serotype M3 (strain SSI-1)</name>
    <dbReference type="NCBI Taxonomy" id="193567"/>
    <lineage>
        <taxon>Bacteria</taxon>
        <taxon>Bacillati</taxon>
        <taxon>Bacillota</taxon>
        <taxon>Bacilli</taxon>
        <taxon>Lactobacillales</taxon>
        <taxon>Streptococcaceae</taxon>
        <taxon>Streptococcus</taxon>
    </lineage>
</organism>
<reference key="1">
    <citation type="journal article" date="2003" name="Genome Res.">
        <title>Genome sequence of an M3 strain of Streptococcus pyogenes reveals a large-scale genomic rearrangement in invasive strains and new insights into phage evolution.</title>
        <authorList>
            <person name="Nakagawa I."/>
            <person name="Kurokawa K."/>
            <person name="Yamashita A."/>
            <person name="Nakata M."/>
            <person name="Tomiyasu Y."/>
            <person name="Okahashi N."/>
            <person name="Kawabata S."/>
            <person name="Yamazaki K."/>
            <person name="Shiba T."/>
            <person name="Yasunaga T."/>
            <person name="Hayashi H."/>
            <person name="Hattori M."/>
            <person name="Hamada S."/>
        </authorList>
    </citation>
    <scope>NUCLEOTIDE SEQUENCE [LARGE SCALE GENOMIC DNA]</scope>
    <source>
        <strain>SSI-1</strain>
    </source>
</reference>
<name>UPPP_STRPQ</name>
<feature type="chain" id="PRO_0000411655" description="Undecaprenyl-diphosphatase">
    <location>
        <begin position="1"/>
        <end position="279"/>
    </location>
</feature>
<feature type="transmembrane region" description="Helical" evidence="1">
    <location>
        <begin position="2"/>
        <end position="22"/>
    </location>
</feature>
<feature type="transmembrane region" description="Helical" evidence="1">
    <location>
        <begin position="44"/>
        <end position="64"/>
    </location>
</feature>
<feature type="transmembrane region" description="Helical" evidence="1">
    <location>
        <begin position="85"/>
        <end position="105"/>
    </location>
</feature>
<feature type="transmembrane region" description="Helical" evidence="1">
    <location>
        <begin position="113"/>
        <end position="133"/>
    </location>
</feature>
<feature type="transmembrane region" description="Helical" evidence="1">
    <location>
        <begin position="163"/>
        <end position="183"/>
    </location>
</feature>
<feature type="transmembrane region" description="Helical" evidence="1">
    <location>
        <begin position="188"/>
        <end position="208"/>
    </location>
</feature>
<feature type="transmembrane region" description="Helical" evidence="1">
    <location>
        <begin position="223"/>
        <end position="243"/>
    </location>
</feature>
<feature type="transmembrane region" description="Helical" evidence="1">
    <location>
        <begin position="255"/>
        <end position="275"/>
    </location>
</feature>
<dbReference type="EC" id="3.6.1.27" evidence="1"/>
<dbReference type="EMBL" id="BA000034">
    <property type="protein sequence ID" value="BAC63306.1"/>
    <property type="molecule type" value="Genomic_DNA"/>
</dbReference>
<dbReference type="RefSeq" id="WP_002986031.1">
    <property type="nucleotide sequence ID" value="NC_004606.1"/>
</dbReference>
<dbReference type="SMR" id="P0DH31"/>
<dbReference type="KEGG" id="sps:SPs0211"/>
<dbReference type="HOGENOM" id="CLU_060296_2_0_9"/>
<dbReference type="GO" id="GO:0005886">
    <property type="term" value="C:plasma membrane"/>
    <property type="evidence" value="ECO:0007669"/>
    <property type="project" value="UniProtKB-SubCell"/>
</dbReference>
<dbReference type="GO" id="GO:0050380">
    <property type="term" value="F:undecaprenyl-diphosphatase activity"/>
    <property type="evidence" value="ECO:0007669"/>
    <property type="project" value="UniProtKB-UniRule"/>
</dbReference>
<dbReference type="GO" id="GO:0071555">
    <property type="term" value="P:cell wall organization"/>
    <property type="evidence" value="ECO:0007669"/>
    <property type="project" value="UniProtKB-KW"/>
</dbReference>
<dbReference type="GO" id="GO:0009252">
    <property type="term" value="P:peptidoglycan biosynthetic process"/>
    <property type="evidence" value="ECO:0007669"/>
    <property type="project" value="UniProtKB-KW"/>
</dbReference>
<dbReference type="GO" id="GO:0008360">
    <property type="term" value="P:regulation of cell shape"/>
    <property type="evidence" value="ECO:0007669"/>
    <property type="project" value="UniProtKB-KW"/>
</dbReference>
<dbReference type="GO" id="GO:0046677">
    <property type="term" value="P:response to antibiotic"/>
    <property type="evidence" value="ECO:0007669"/>
    <property type="project" value="UniProtKB-UniRule"/>
</dbReference>
<dbReference type="HAMAP" id="MF_01006">
    <property type="entry name" value="Undec_diphosphatase"/>
    <property type="match status" value="1"/>
</dbReference>
<dbReference type="InterPro" id="IPR003824">
    <property type="entry name" value="UppP"/>
</dbReference>
<dbReference type="NCBIfam" id="NF001391">
    <property type="entry name" value="PRK00281.1-5"/>
    <property type="match status" value="1"/>
</dbReference>
<dbReference type="PANTHER" id="PTHR30622">
    <property type="entry name" value="UNDECAPRENYL-DIPHOSPHATASE"/>
    <property type="match status" value="1"/>
</dbReference>
<dbReference type="PANTHER" id="PTHR30622:SF3">
    <property type="entry name" value="UNDECAPRENYL-DIPHOSPHATASE"/>
    <property type="match status" value="1"/>
</dbReference>
<dbReference type="Pfam" id="PF02673">
    <property type="entry name" value="BacA"/>
    <property type="match status" value="1"/>
</dbReference>
<gene>
    <name evidence="1" type="primary">uppP</name>
    <name type="synonym">bacA</name>
    <name type="synonym">upk</name>
    <name type="ordered locus">SPs0211</name>
</gene>
<evidence type="ECO:0000255" key="1">
    <source>
        <dbReference type="HAMAP-Rule" id="MF_01006"/>
    </source>
</evidence>
<protein>
    <recommendedName>
        <fullName evidence="1">Undecaprenyl-diphosphatase</fullName>
        <ecNumber evidence="1">3.6.1.27</ecNumber>
    </recommendedName>
    <alternativeName>
        <fullName evidence="1">Bacitracin resistance protein</fullName>
    </alternativeName>
    <alternativeName>
        <fullName evidence="1">Undecaprenyl pyrophosphate phosphatase</fullName>
    </alternativeName>
</protein>